<gene>
    <name evidence="3" type="primary">PRFB3</name>
    <name evidence="6" type="ordered locus">At3g57190</name>
    <name evidence="7" type="ORF">F28O9.40</name>
</gene>
<keyword id="KW-0150">Chloroplast</keyword>
<keyword id="KW-0341">Growth regulation</keyword>
<keyword id="KW-0934">Plastid</keyword>
<keyword id="KW-1185">Reference proteome</keyword>
<keyword id="KW-0694">RNA-binding</keyword>
<keyword id="KW-0809">Transit peptide</keyword>
<feature type="transit peptide" description="Chloroplast" evidence="4">
    <location>
        <begin position="1"/>
        <end status="unknown"/>
    </location>
</feature>
<feature type="chain" id="PRO_0000430966" description="Peptide chain release factor PrfB3, chloroplastic" evidence="4">
    <location>
        <begin status="unknown"/>
        <end position="406"/>
    </location>
</feature>
<dbReference type="EMBL" id="AL137080">
    <property type="protein sequence ID" value="CAB68125.1"/>
    <property type="status" value="ALT_SEQ"/>
    <property type="molecule type" value="Genomic_DNA"/>
</dbReference>
<dbReference type="EMBL" id="CP002686">
    <property type="protein sequence ID" value="AEE79625.1"/>
    <property type="molecule type" value="Genomic_DNA"/>
</dbReference>
<dbReference type="EMBL" id="AY128374">
    <property type="protein sequence ID" value="AAM91577.1"/>
    <property type="status" value="ALT_INIT"/>
    <property type="molecule type" value="mRNA"/>
</dbReference>
<dbReference type="EMBL" id="BT008450">
    <property type="protein sequence ID" value="AAP37809.1"/>
    <property type="molecule type" value="mRNA"/>
</dbReference>
<dbReference type="PIR" id="T45797">
    <property type="entry name" value="T45797"/>
</dbReference>
<dbReference type="RefSeq" id="NP_191278.2">
    <property type="nucleotide sequence ID" value="NM_115579.3"/>
</dbReference>
<dbReference type="SMR" id="F4J264"/>
<dbReference type="FunCoup" id="F4J264">
    <property type="interactions" value="828"/>
</dbReference>
<dbReference type="STRING" id="3702.F4J264"/>
<dbReference type="PaxDb" id="3702-AT3G57190.1"/>
<dbReference type="ProteomicsDB" id="234804"/>
<dbReference type="EnsemblPlants" id="AT3G57190.1">
    <property type="protein sequence ID" value="AT3G57190.1"/>
    <property type="gene ID" value="AT3G57190"/>
</dbReference>
<dbReference type="GeneID" id="824886"/>
<dbReference type="Gramene" id="AT3G57190.1">
    <property type="protein sequence ID" value="AT3G57190.1"/>
    <property type="gene ID" value="AT3G57190"/>
</dbReference>
<dbReference type="KEGG" id="ath:AT3G57190"/>
<dbReference type="Araport" id="AT3G57190"/>
<dbReference type="TAIR" id="AT3G57190">
    <property type="gene designation" value="PRFB3"/>
</dbReference>
<dbReference type="eggNOG" id="KOG2726">
    <property type="taxonomic scope" value="Eukaryota"/>
</dbReference>
<dbReference type="HOGENOM" id="CLU_036856_6_2_1"/>
<dbReference type="InParanoid" id="F4J264"/>
<dbReference type="OMA" id="MDSINYD"/>
<dbReference type="OrthoDB" id="2019491at2759"/>
<dbReference type="PRO" id="PR:F4J264"/>
<dbReference type="Proteomes" id="UP000006548">
    <property type="component" value="Chromosome 3"/>
</dbReference>
<dbReference type="ExpressionAtlas" id="F4J264">
    <property type="expression patterns" value="baseline and differential"/>
</dbReference>
<dbReference type="GO" id="GO:0009507">
    <property type="term" value="C:chloroplast"/>
    <property type="evidence" value="ECO:0000314"/>
    <property type="project" value="UniProtKB"/>
</dbReference>
<dbReference type="GO" id="GO:0009570">
    <property type="term" value="C:chloroplast stroma"/>
    <property type="evidence" value="ECO:0000314"/>
    <property type="project" value="TAIR"/>
</dbReference>
<dbReference type="GO" id="GO:0003730">
    <property type="term" value="F:mRNA 3'-UTR binding"/>
    <property type="evidence" value="ECO:0000314"/>
    <property type="project" value="TAIR"/>
</dbReference>
<dbReference type="GO" id="GO:0043565">
    <property type="term" value="F:sequence-specific DNA binding"/>
    <property type="evidence" value="ECO:0000314"/>
    <property type="project" value="TAIR"/>
</dbReference>
<dbReference type="GO" id="GO:0003747">
    <property type="term" value="F:translation release factor activity"/>
    <property type="evidence" value="ECO:0007669"/>
    <property type="project" value="InterPro"/>
</dbReference>
<dbReference type="GO" id="GO:0009658">
    <property type="term" value="P:chloroplast organization"/>
    <property type="evidence" value="ECO:0000315"/>
    <property type="project" value="TAIR"/>
</dbReference>
<dbReference type="GO" id="GO:0043488">
    <property type="term" value="P:regulation of mRNA stability"/>
    <property type="evidence" value="ECO:0000315"/>
    <property type="project" value="TAIR"/>
</dbReference>
<dbReference type="Gene3D" id="3.30.160.20">
    <property type="match status" value="1"/>
</dbReference>
<dbReference type="Gene3D" id="3.30.70.1660">
    <property type="match status" value="1"/>
</dbReference>
<dbReference type="InterPro" id="IPR005139">
    <property type="entry name" value="PCRF"/>
</dbReference>
<dbReference type="InterPro" id="IPR000352">
    <property type="entry name" value="Pep_chain_release_fac_I"/>
</dbReference>
<dbReference type="InterPro" id="IPR045853">
    <property type="entry name" value="Pep_chain_release_fac_I_sf"/>
</dbReference>
<dbReference type="PANTHER" id="PTHR43116">
    <property type="entry name" value="PEPTIDE CHAIN RELEASE FACTOR 2"/>
    <property type="match status" value="1"/>
</dbReference>
<dbReference type="PANTHER" id="PTHR43116:SF4">
    <property type="entry name" value="PEPTIDE CHAIN RELEASE FACTOR PRFB3, CHLOROPLASTIC"/>
    <property type="match status" value="1"/>
</dbReference>
<dbReference type="Pfam" id="PF03462">
    <property type="entry name" value="PCRF"/>
    <property type="match status" value="1"/>
</dbReference>
<dbReference type="Pfam" id="PF00472">
    <property type="entry name" value="RF-1"/>
    <property type="match status" value="1"/>
</dbReference>
<dbReference type="SMART" id="SM00937">
    <property type="entry name" value="PCRF"/>
    <property type="match status" value="1"/>
</dbReference>
<dbReference type="SUPFAM" id="SSF75620">
    <property type="entry name" value="Release factor"/>
    <property type="match status" value="1"/>
</dbReference>
<name>PRFB3_ARATH</name>
<sequence>MAAKIIGGCCSWRRFYRKRTSSRFLIFSVRASSSMDDMDTVYKQLGLFSLKKKIKDVVLKAEMFAPDALELEEEQWIKQEETMRYFDLWDDPAKSDEILLKLADRAKAVDSLKDLKYKAEEAKLIIQLGEMDAIDYSLFEQAYDSSLDVSRSLHHYEMSKLLRDQYDAEGACMIIKSGSPGAKSQIWTEQVVSMYIKWAERLGQNARVAEKCSLLSNKSGVSSATIEFEFEFAYGYLLGERGVHRLIISSTSNEECSATVDIIPLFLRASPDFEVKEGDLIVSYPAKEDHKIAENMVCIHHIPSGVTLQSSGERNRFANRIKALNRLKAKLLVIAKEQKVSDVNKIDSKNILEPREETRSYVSKGHKMVVDRKTGLEILDLKSVLDGNIGPLLGAHISMRRSIDAI</sequence>
<proteinExistence type="evidence at protein level"/>
<comment type="function">
    <text evidence="1">Involved in the light- and stress-dependent regulation of stability of 3' processed petB transcripts, thus regulating cytochrome b6 accumulation, a rate-limiting step in photosynthetic electron transport. May be recruited to specifically protect petB transcripts against 3'-5' exonucleolytic attack by masking the 3' ends. Does not function as release factor.</text>
</comment>
<comment type="subunit">
    <text evidence="2">Interacts with PDE338.</text>
</comment>
<comment type="subcellular location">
    <subcellularLocation>
        <location evidence="1">Plastid</location>
        <location evidence="1">Chloroplast stroma</location>
    </subcellularLocation>
    <subcellularLocation>
        <location evidence="2">Plastid</location>
        <location evidence="2">Chloroplast</location>
    </subcellularLocation>
</comment>
<comment type="disruption phenotype">
    <text evidence="1">High chlorophyll fluorescence (hcf) phenotype and plant death at seedling stage when homozygous.</text>
</comment>
<comment type="similarity">
    <text evidence="4">Belongs to the prokaryotic/mitochondrial release factor family.</text>
</comment>
<comment type="caution">
    <text evidence="5">Lacks the stop codon recognition motif 'SPF' and the catalytic center 'GGQ' for peptidyl-tRNA hydrolysis, which are two conserved features of the family.</text>
</comment>
<comment type="sequence caution" evidence="4">
    <conflict type="erroneous initiation">
        <sequence resource="EMBL-CDS" id="AAM91577"/>
    </conflict>
    <text>Truncated N-terminus.</text>
</comment>
<comment type="sequence caution" evidence="4">
    <conflict type="erroneous gene model prediction">
        <sequence resource="EMBL-CDS" id="CAB68125"/>
    </conflict>
</comment>
<protein>
    <recommendedName>
        <fullName evidence="3">Peptide chain release factor PrfB3, chloroplastic</fullName>
        <shortName evidence="3">AtPrfB3</shortName>
    </recommendedName>
</protein>
<accession>F4J264</accession>
<accession>Q8L7M2</accession>
<accession>Q9M2M8</accession>
<reference key="1">
    <citation type="journal article" date="2000" name="Nature">
        <title>Sequence and analysis of chromosome 3 of the plant Arabidopsis thaliana.</title>
        <authorList>
            <person name="Salanoubat M."/>
            <person name="Lemcke K."/>
            <person name="Rieger M."/>
            <person name="Ansorge W."/>
            <person name="Unseld M."/>
            <person name="Fartmann B."/>
            <person name="Valle G."/>
            <person name="Bloecker H."/>
            <person name="Perez-Alonso M."/>
            <person name="Obermaier B."/>
            <person name="Delseny M."/>
            <person name="Boutry M."/>
            <person name="Grivell L.A."/>
            <person name="Mache R."/>
            <person name="Puigdomenech P."/>
            <person name="De Simone V."/>
            <person name="Choisne N."/>
            <person name="Artiguenave F."/>
            <person name="Robert C."/>
            <person name="Brottier P."/>
            <person name="Wincker P."/>
            <person name="Cattolico L."/>
            <person name="Weissenbach J."/>
            <person name="Saurin W."/>
            <person name="Quetier F."/>
            <person name="Schaefer M."/>
            <person name="Mueller-Auer S."/>
            <person name="Gabel C."/>
            <person name="Fuchs M."/>
            <person name="Benes V."/>
            <person name="Wurmbach E."/>
            <person name="Drzonek H."/>
            <person name="Erfle H."/>
            <person name="Jordan N."/>
            <person name="Bangert S."/>
            <person name="Wiedelmann R."/>
            <person name="Kranz H."/>
            <person name="Voss H."/>
            <person name="Holland R."/>
            <person name="Brandt P."/>
            <person name="Nyakatura G."/>
            <person name="Vezzi A."/>
            <person name="D'Angelo M."/>
            <person name="Pallavicini A."/>
            <person name="Toppo S."/>
            <person name="Simionati B."/>
            <person name="Conrad A."/>
            <person name="Hornischer K."/>
            <person name="Kauer G."/>
            <person name="Loehnert T.-H."/>
            <person name="Nordsiek G."/>
            <person name="Reichelt J."/>
            <person name="Scharfe M."/>
            <person name="Schoen O."/>
            <person name="Bargues M."/>
            <person name="Terol J."/>
            <person name="Climent J."/>
            <person name="Navarro P."/>
            <person name="Collado C."/>
            <person name="Perez-Perez A."/>
            <person name="Ottenwaelder B."/>
            <person name="Duchemin D."/>
            <person name="Cooke R."/>
            <person name="Laudie M."/>
            <person name="Berger-Llauro C."/>
            <person name="Purnelle B."/>
            <person name="Masuy D."/>
            <person name="de Haan M."/>
            <person name="Maarse A.C."/>
            <person name="Alcaraz J.-P."/>
            <person name="Cottet A."/>
            <person name="Casacuberta E."/>
            <person name="Monfort A."/>
            <person name="Argiriou A."/>
            <person name="Flores M."/>
            <person name="Liguori R."/>
            <person name="Vitale D."/>
            <person name="Mannhaupt G."/>
            <person name="Haase D."/>
            <person name="Schoof H."/>
            <person name="Rudd S."/>
            <person name="Zaccaria P."/>
            <person name="Mewes H.-W."/>
            <person name="Mayer K.F.X."/>
            <person name="Kaul S."/>
            <person name="Town C.D."/>
            <person name="Koo H.L."/>
            <person name="Tallon L.J."/>
            <person name="Jenkins J."/>
            <person name="Rooney T."/>
            <person name="Rizzo M."/>
            <person name="Walts A."/>
            <person name="Utterback T."/>
            <person name="Fujii C.Y."/>
            <person name="Shea T.P."/>
            <person name="Creasy T.H."/>
            <person name="Haas B."/>
            <person name="Maiti R."/>
            <person name="Wu D."/>
            <person name="Peterson J."/>
            <person name="Van Aken S."/>
            <person name="Pai G."/>
            <person name="Militscher J."/>
            <person name="Sellers P."/>
            <person name="Gill J.E."/>
            <person name="Feldblyum T.V."/>
            <person name="Preuss D."/>
            <person name="Lin X."/>
            <person name="Nierman W.C."/>
            <person name="Salzberg S.L."/>
            <person name="White O."/>
            <person name="Venter J.C."/>
            <person name="Fraser C.M."/>
            <person name="Kaneko T."/>
            <person name="Nakamura Y."/>
            <person name="Sato S."/>
            <person name="Kato T."/>
            <person name="Asamizu E."/>
            <person name="Sasamoto S."/>
            <person name="Kimura T."/>
            <person name="Idesawa K."/>
            <person name="Kawashima K."/>
            <person name="Kishida Y."/>
            <person name="Kiyokawa C."/>
            <person name="Kohara M."/>
            <person name="Matsumoto M."/>
            <person name="Matsuno A."/>
            <person name="Muraki A."/>
            <person name="Nakayama S."/>
            <person name="Nakazaki N."/>
            <person name="Shinpo S."/>
            <person name="Takeuchi C."/>
            <person name="Wada T."/>
            <person name="Watanabe A."/>
            <person name="Yamada M."/>
            <person name="Yasuda M."/>
            <person name="Tabata S."/>
        </authorList>
    </citation>
    <scope>NUCLEOTIDE SEQUENCE [LARGE SCALE GENOMIC DNA]</scope>
    <source>
        <strain>cv. Columbia</strain>
    </source>
</reference>
<reference key="2">
    <citation type="journal article" date="2017" name="Plant J.">
        <title>Araport11: a complete reannotation of the Arabidopsis thaliana reference genome.</title>
        <authorList>
            <person name="Cheng C.Y."/>
            <person name="Krishnakumar V."/>
            <person name="Chan A.P."/>
            <person name="Thibaud-Nissen F."/>
            <person name="Schobel S."/>
            <person name="Town C.D."/>
        </authorList>
    </citation>
    <scope>GENOME REANNOTATION</scope>
    <source>
        <strain>cv. Columbia</strain>
    </source>
</reference>
<reference key="3">
    <citation type="journal article" date="2003" name="Science">
        <title>Empirical analysis of transcriptional activity in the Arabidopsis genome.</title>
        <authorList>
            <person name="Yamada K."/>
            <person name="Lim J."/>
            <person name="Dale J.M."/>
            <person name="Chen H."/>
            <person name="Shinn P."/>
            <person name="Palm C.J."/>
            <person name="Southwick A.M."/>
            <person name="Wu H.C."/>
            <person name="Kim C.J."/>
            <person name="Nguyen M."/>
            <person name="Pham P.K."/>
            <person name="Cheuk R.F."/>
            <person name="Karlin-Newmann G."/>
            <person name="Liu S.X."/>
            <person name="Lam B."/>
            <person name="Sakano H."/>
            <person name="Wu T."/>
            <person name="Yu G."/>
            <person name="Miranda M."/>
            <person name="Quach H.L."/>
            <person name="Tripp M."/>
            <person name="Chang C.H."/>
            <person name="Lee J.M."/>
            <person name="Toriumi M.J."/>
            <person name="Chan M.M."/>
            <person name="Tang C.C."/>
            <person name="Onodera C.S."/>
            <person name="Deng J.M."/>
            <person name="Akiyama K."/>
            <person name="Ansari Y."/>
            <person name="Arakawa T."/>
            <person name="Banh J."/>
            <person name="Banno F."/>
            <person name="Bowser L."/>
            <person name="Brooks S.Y."/>
            <person name="Carninci P."/>
            <person name="Chao Q."/>
            <person name="Choy N."/>
            <person name="Enju A."/>
            <person name="Goldsmith A.D."/>
            <person name="Gurjal M."/>
            <person name="Hansen N.F."/>
            <person name="Hayashizaki Y."/>
            <person name="Johnson-Hopson C."/>
            <person name="Hsuan V.W."/>
            <person name="Iida K."/>
            <person name="Karnes M."/>
            <person name="Khan S."/>
            <person name="Koesema E."/>
            <person name="Ishida J."/>
            <person name="Jiang P.X."/>
            <person name="Jones T."/>
            <person name="Kawai J."/>
            <person name="Kamiya A."/>
            <person name="Meyers C."/>
            <person name="Nakajima M."/>
            <person name="Narusaka M."/>
            <person name="Seki M."/>
            <person name="Sakurai T."/>
            <person name="Satou M."/>
            <person name="Tamse R."/>
            <person name="Vaysberg M."/>
            <person name="Wallender E.K."/>
            <person name="Wong C."/>
            <person name="Yamamura Y."/>
            <person name="Yuan S."/>
            <person name="Shinozaki K."/>
            <person name="Davis R.W."/>
            <person name="Theologis A."/>
            <person name="Ecker J.R."/>
        </authorList>
    </citation>
    <scope>NUCLEOTIDE SEQUENCE [LARGE SCALE MRNA] OF 4-406</scope>
    <source>
        <strain>cv. Columbia</strain>
    </source>
</reference>
<reference key="4">
    <citation type="journal article" date="2011" name="Plant Cell">
        <title>Recruitment of a ribosomal release factor for light- and stress-dependent regulation of petB transcript stability in Arabidopsis chloroplasts.</title>
        <authorList>
            <person name="Stoppel R."/>
            <person name="Lezhneva L."/>
            <person name="Schwenkert S."/>
            <person name="Torabi S."/>
            <person name="Felder S."/>
            <person name="Meierhoff K."/>
            <person name="Westhoff P."/>
            <person name="Meurer J."/>
        </authorList>
    </citation>
    <scope>FUNCTION</scope>
    <scope>SUBCELLULAR LOCATION</scope>
    <scope>DISRUPTION PHENOTYPE</scope>
</reference>
<reference key="5">
    <citation type="journal article" date="2019" name="Plant Cell">
        <title>An RNA Chaperone-Like Protein Plays Critical Roles in Chloroplast mRNA Stability and Translation in Arabidopsis and Maize.</title>
        <authorList>
            <person name="Jiang J."/>
            <person name="Chai X."/>
            <person name="Manavski N."/>
            <person name="Williams-Carrier R."/>
            <person name="He B."/>
            <person name="Brachmann A."/>
            <person name="Ji D."/>
            <person name="Ouyang M."/>
            <person name="Liu Y."/>
            <person name="Barkan A."/>
            <person name="Meurer J."/>
            <person name="Zhang L."/>
            <person name="Chi W."/>
        </authorList>
    </citation>
    <scope>INTERACTION WITH PDE338</scope>
    <scope>SUBCELLULAR LOCATION</scope>
</reference>
<organism>
    <name type="scientific">Arabidopsis thaliana</name>
    <name type="common">Mouse-ear cress</name>
    <dbReference type="NCBI Taxonomy" id="3702"/>
    <lineage>
        <taxon>Eukaryota</taxon>
        <taxon>Viridiplantae</taxon>
        <taxon>Streptophyta</taxon>
        <taxon>Embryophyta</taxon>
        <taxon>Tracheophyta</taxon>
        <taxon>Spermatophyta</taxon>
        <taxon>Magnoliopsida</taxon>
        <taxon>eudicotyledons</taxon>
        <taxon>Gunneridae</taxon>
        <taxon>Pentapetalae</taxon>
        <taxon>rosids</taxon>
        <taxon>malvids</taxon>
        <taxon>Brassicales</taxon>
        <taxon>Brassicaceae</taxon>
        <taxon>Camelineae</taxon>
        <taxon>Arabidopsis</taxon>
    </lineage>
</organism>
<evidence type="ECO:0000269" key="1">
    <source>
    </source>
</evidence>
<evidence type="ECO:0000269" key="2">
    <source>
    </source>
</evidence>
<evidence type="ECO:0000303" key="3">
    <source>
    </source>
</evidence>
<evidence type="ECO:0000305" key="4"/>
<evidence type="ECO:0000305" key="5">
    <source>
    </source>
</evidence>
<evidence type="ECO:0000312" key="6">
    <source>
        <dbReference type="Araport" id="AT3G57190"/>
    </source>
</evidence>
<evidence type="ECO:0000312" key="7">
    <source>
        <dbReference type="EMBL" id="CAB68125.1"/>
    </source>
</evidence>